<evidence type="ECO:0000255" key="1">
    <source>
        <dbReference type="HAMAP-Rule" id="MF_00600"/>
    </source>
</evidence>
<evidence type="ECO:0000305" key="2"/>
<protein>
    <recommendedName>
        <fullName evidence="1">Chaperonin GroEL</fullName>
        <ecNumber evidence="1">5.6.1.7</ecNumber>
    </recommendedName>
    <alternativeName>
        <fullName evidence="1">60 kDa chaperonin</fullName>
    </alternativeName>
    <alternativeName>
        <fullName evidence="1">Chaperonin-60</fullName>
        <shortName evidence="1">Cpn60</shortName>
    </alternativeName>
</protein>
<name>CH60_LACJO</name>
<sequence length="543" mass="57517">MAKEIKFSENARHSLLKGVDKLADTVKTTLGPKGRNVVLEKSYGAPDITNDGVTIAKSIELENHFENMGAKLVSEAAQKTNDIAGDGTTTATVLTQAIVREGMKNVTAGANPVGIRRGIETATKAAVDELHKISHKVSTKDEIAQVASVSSASTEVGNLIADAMEKVGHDGVITIEESKGIDTELSVVEGMQFDRGYLSQYMVTDNDKMEADLDNPYILITDKKISNIQDILPLLQEIVQQGKSLLIIADDVDGEALPTLVLNKIRGTFNVVAVKAPGFGDRRKAMLEDIAILTGGTVISSDLGLELKDTKIDQLGKAGKVTVTKDSTTIVEGAGSKEAIAERVDQIKKQIADTTSDFDREKLQERLAKLAGGVAVIKVGAATETELKERKYRIEDALNATRAAVEEGYVAGGGTALVDVMKSIQGTVKGDSEDAETGVKIVMKALGAPVRQIAENAGKDGAVILDHLEHEDPEVGYNAATNKWENMVKAGIIDPTKVTRSALQNAASIAALLLTTEAVVADAPEDDKNQAPAAPNPGMGMGM</sequence>
<reference key="1">
    <citation type="journal article" date="1999" name="Appl. Environ. Microbiol.">
        <title>The groESL chaperone operon of Lactobacillus johnsonii.</title>
        <authorList>
            <person name="Walker D.C."/>
            <person name="Girgis H.S."/>
            <person name="Klaenhammer T.R."/>
        </authorList>
    </citation>
    <scope>NUCLEOTIDE SEQUENCE [GENOMIC DNA]</scope>
    <source>
        <strain>ATCC 11506 / JCM 1101 / NBRC 13952 / NCIMB 8795 / R-26 / VPI 11088</strain>
    </source>
</reference>
<reference key="2">
    <citation type="journal article" date="2004" name="Proc. Natl. Acad. Sci. U.S.A.">
        <title>The genome sequence of the probiotic intestinal bacterium Lactobacillus johnsonii NCC 533.</title>
        <authorList>
            <person name="Pridmore R.D."/>
            <person name="Berger B."/>
            <person name="Desiere F."/>
            <person name="Vilanova D."/>
            <person name="Barretto C."/>
            <person name="Pittet A.-C."/>
            <person name="Zwahlen M.-C."/>
            <person name="Rouvet M."/>
            <person name="Altermann E."/>
            <person name="Barrangou R."/>
            <person name="Mollet B."/>
            <person name="Mercenier A."/>
            <person name="Klaenhammer T."/>
            <person name="Arigoni F."/>
            <person name="Schell M.A."/>
        </authorList>
    </citation>
    <scope>NUCLEOTIDE SEQUENCE [LARGE SCALE GENOMIC DNA]</scope>
    <source>
        <strain>CNCM I-1225 / La1 / NCC 533</strain>
    </source>
</reference>
<proteinExistence type="inferred from homology"/>
<comment type="function">
    <text evidence="1">Together with its co-chaperonin GroES, plays an essential role in assisting protein folding. The GroEL-GroES system forms a nano-cage that allows encapsulation of the non-native substrate proteins and provides a physical environment optimized to promote and accelerate protein folding.</text>
</comment>
<comment type="catalytic activity">
    <reaction evidence="1">
        <text>ATP + H2O + a folded polypeptide = ADP + phosphate + an unfolded polypeptide.</text>
        <dbReference type="EC" id="5.6.1.7"/>
    </reaction>
</comment>
<comment type="subunit">
    <text evidence="1">Forms a cylinder of 14 subunits composed of two heptameric rings stacked back-to-back. Interacts with the co-chaperonin GroES.</text>
</comment>
<comment type="subcellular location">
    <subcellularLocation>
        <location evidence="1">Cytoplasm</location>
    </subcellularLocation>
</comment>
<comment type="similarity">
    <text evidence="1">Belongs to the chaperonin (HSP60) family.</text>
</comment>
<gene>
    <name evidence="1" type="primary">groEL</name>
    <name evidence="1" type="synonym">groL</name>
    <name type="ordered locus">LJ_0461</name>
</gene>
<dbReference type="EC" id="5.6.1.7" evidence="1"/>
<dbReference type="EMBL" id="AF214488">
    <property type="protein sequence ID" value="AAF75593.1"/>
    <property type="molecule type" value="Genomic_DNA"/>
</dbReference>
<dbReference type="EMBL" id="AE017198">
    <property type="protein sequence ID" value="AAS08453.1"/>
    <property type="molecule type" value="Genomic_DNA"/>
</dbReference>
<dbReference type="RefSeq" id="WP_004896780.1">
    <property type="nucleotide sequence ID" value="NC_005362.1"/>
</dbReference>
<dbReference type="SMR" id="Q9KJ23"/>
<dbReference type="GeneID" id="83569887"/>
<dbReference type="KEGG" id="ljo:LJ_0461"/>
<dbReference type="eggNOG" id="COG0459">
    <property type="taxonomic scope" value="Bacteria"/>
</dbReference>
<dbReference type="HOGENOM" id="CLU_016503_1_1_9"/>
<dbReference type="Proteomes" id="UP000000581">
    <property type="component" value="Chromosome"/>
</dbReference>
<dbReference type="GO" id="GO:0009986">
    <property type="term" value="C:cell surface"/>
    <property type="evidence" value="ECO:0000314"/>
    <property type="project" value="CAFA"/>
</dbReference>
<dbReference type="GO" id="GO:0005737">
    <property type="term" value="C:cytoplasm"/>
    <property type="evidence" value="ECO:0007669"/>
    <property type="project" value="UniProtKB-SubCell"/>
</dbReference>
<dbReference type="GO" id="GO:0005524">
    <property type="term" value="F:ATP binding"/>
    <property type="evidence" value="ECO:0007669"/>
    <property type="project" value="UniProtKB-UniRule"/>
</dbReference>
<dbReference type="GO" id="GO:0140662">
    <property type="term" value="F:ATP-dependent protein folding chaperone"/>
    <property type="evidence" value="ECO:0007669"/>
    <property type="project" value="InterPro"/>
</dbReference>
<dbReference type="GO" id="GO:0046812">
    <property type="term" value="F:host cell surface binding"/>
    <property type="evidence" value="ECO:0000314"/>
    <property type="project" value="CAFA"/>
</dbReference>
<dbReference type="GO" id="GO:0016853">
    <property type="term" value="F:isomerase activity"/>
    <property type="evidence" value="ECO:0007669"/>
    <property type="project" value="UniProtKB-KW"/>
</dbReference>
<dbReference type="GO" id="GO:0051082">
    <property type="term" value="F:unfolded protein binding"/>
    <property type="evidence" value="ECO:0007669"/>
    <property type="project" value="UniProtKB-UniRule"/>
</dbReference>
<dbReference type="GO" id="GO:0098630">
    <property type="term" value="P:aggregation of unicellular organisms"/>
    <property type="evidence" value="ECO:0000314"/>
    <property type="project" value="CAFA"/>
</dbReference>
<dbReference type="GO" id="GO:0032757">
    <property type="term" value="P:positive regulation of interleukin-8 production"/>
    <property type="evidence" value="ECO:0000316"/>
    <property type="project" value="CAFA"/>
</dbReference>
<dbReference type="GO" id="GO:0042026">
    <property type="term" value="P:protein refolding"/>
    <property type="evidence" value="ECO:0007669"/>
    <property type="project" value="UniProtKB-UniRule"/>
</dbReference>
<dbReference type="CDD" id="cd03344">
    <property type="entry name" value="GroEL"/>
    <property type="match status" value="1"/>
</dbReference>
<dbReference type="FunFam" id="3.50.7.10:FF:000001">
    <property type="entry name" value="60 kDa chaperonin"/>
    <property type="match status" value="1"/>
</dbReference>
<dbReference type="Gene3D" id="3.50.7.10">
    <property type="entry name" value="GroEL"/>
    <property type="match status" value="1"/>
</dbReference>
<dbReference type="Gene3D" id="1.10.560.10">
    <property type="entry name" value="GroEL-like equatorial domain"/>
    <property type="match status" value="1"/>
</dbReference>
<dbReference type="Gene3D" id="3.30.260.10">
    <property type="entry name" value="TCP-1-like chaperonin intermediate domain"/>
    <property type="match status" value="1"/>
</dbReference>
<dbReference type="HAMAP" id="MF_00600">
    <property type="entry name" value="CH60"/>
    <property type="match status" value="1"/>
</dbReference>
<dbReference type="InterPro" id="IPR018370">
    <property type="entry name" value="Chaperonin_Cpn60_CS"/>
</dbReference>
<dbReference type="InterPro" id="IPR001844">
    <property type="entry name" value="Cpn60/GroEL"/>
</dbReference>
<dbReference type="InterPro" id="IPR002423">
    <property type="entry name" value="Cpn60/GroEL/TCP-1"/>
</dbReference>
<dbReference type="InterPro" id="IPR027409">
    <property type="entry name" value="GroEL-like_apical_dom_sf"/>
</dbReference>
<dbReference type="InterPro" id="IPR027413">
    <property type="entry name" value="GROEL-like_equatorial_sf"/>
</dbReference>
<dbReference type="InterPro" id="IPR027410">
    <property type="entry name" value="TCP-1-like_intermed_sf"/>
</dbReference>
<dbReference type="NCBIfam" id="TIGR02348">
    <property type="entry name" value="GroEL"/>
    <property type="match status" value="1"/>
</dbReference>
<dbReference type="NCBIfam" id="NF000592">
    <property type="entry name" value="PRK00013.1"/>
    <property type="match status" value="1"/>
</dbReference>
<dbReference type="NCBIfam" id="NF009487">
    <property type="entry name" value="PRK12849.1"/>
    <property type="match status" value="1"/>
</dbReference>
<dbReference type="NCBIfam" id="NF009488">
    <property type="entry name" value="PRK12850.1"/>
    <property type="match status" value="1"/>
</dbReference>
<dbReference type="NCBIfam" id="NF009489">
    <property type="entry name" value="PRK12851.1"/>
    <property type="match status" value="1"/>
</dbReference>
<dbReference type="PANTHER" id="PTHR45633">
    <property type="entry name" value="60 KDA HEAT SHOCK PROTEIN, MITOCHONDRIAL"/>
    <property type="match status" value="1"/>
</dbReference>
<dbReference type="Pfam" id="PF00118">
    <property type="entry name" value="Cpn60_TCP1"/>
    <property type="match status" value="1"/>
</dbReference>
<dbReference type="PRINTS" id="PR00298">
    <property type="entry name" value="CHAPERONIN60"/>
</dbReference>
<dbReference type="SUPFAM" id="SSF52029">
    <property type="entry name" value="GroEL apical domain-like"/>
    <property type="match status" value="1"/>
</dbReference>
<dbReference type="SUPFAM" id="SSF48592">
    <property type="entry name" value="GroEL equatorial domain-like"/>
    <property type="match status" value="2"/>
</dbReference>
<dbReference type="PROSITE" id="PS00296">
    <property type="entry name" value="CHAPERONINS_CPN60"/>
    <property type="match status" value="1"/>
</dbReference>
<organism>
    <name type="scientific">Lactobacillus johnsonii (strain CNCM I-12250 / La1 / NCC 533)</name>
    <dbReference type="NCBI Taxonomy" id="257314"/>
    <lineage>
        <taxon>Bacteria</taxon>
        <taxon>Bacillati</taxon>
        <taxon>Bacillota</taxon>
        <taxon>Bacilli</taxon>
        <taxon>Lactobacillales</taxon>
        <taxon>Lactobacillaceae</taxon>
        <taxon>Lactobacillus</taxon>
    </lineage>
</organism>
<accession>Q9KJ23</accession>
<feature type="chain" id="PRO_0000063399" description="Chaperonin GroEL">
    <location>
        <begin position="1"/>
        <end position="543"/>
    </location>
</feature>
<feature type="binding site" evidence="1">
    <location>
        <begin position="29"/>
        <end position="32"/>
    </location>
    <ligand>
        <name>ATP</name>
        <dbReference type="ChEBI" id="CHEBI:30616"/>
    </ligand>
</feature>
<feature type="binding site" evidence="1">
    <location>
        <begin position="86"/>
        <end position="90"/>
    </location>
    <ligand>
        <name>ATP</name>
        <dbReference type="ChEBI" id="CHEBI:30616"/>
    </ligand>
</feature>
<feature type="binding site" evidence="1">
    <location>
        <position position="413"/>
    </location>
    <ligand>
        <name>ATP</name>
        <dbReference type="ChEBI" id="CHEBI:30616"/>
    </ligand>
</feature>
<feature type="binding site" evidence="1">
    <location>
        <begin position="478"/>
        <end position="480"/>
    </location>
    <ligand>
        <name>ATP</name>
        <dbReference type="ChEBI" id="CHEBI:30616"/>
    </ligand>
</feature>
<feature type="binding site" evidence="1">
    <location>
        <position position="494"/>
    </location>
    <ligand>
        <name>ATP</name>
        <dbReference type="ChEBI" id="CHEBI:30616"/>
    </ligand>
</feature>
<feature type="sequence conflict" description="In Ref. 1; AAF75593." evidence="2" ref="1">
    <original>A</original>
    <variation>R</variation>
    <location>
        <position position="161"/>
    </location>
</feature>
<keyword id="KW-0067">ATP-binding</keyword>
<keyword id="KW-0143">Chaperone</keyword>
<keyword id="KW-0963">Cytoplasm</keyword>
<keyword id="KW-0413">Isomerase</keyword>
<keyword id="KW-0547">Nucleotide-binding</keyword>